<feature type="chain" id="PRO_0000385678" description="GTPase Obg">
    <location>
        <begin position="1"/>
        <end position="371"/>
    </location>
</feature>
<feature type="domain" description="Obg" evidence="2">
    <location>
        <begin position="1"/>
        <end position="159"/>
    </location>
</feature>
<feature type="domain" description="OBG-type G" evidence="1">
    <location>
        <begin position="160"/>
        <end position="327"/>
    </location>
</feature>
<feature type="region of interest" description="Disordered" evidence="3">
    <location>
        <begin position="337"/>
        <end position="371"/>
    </location>
</feature>
<feature type="compositionally biased region" description="Acidic residues" evidence="3">
    <location>
        <begin position="356"/>
        <end position="371"/>
    </location>
</feature>
<feature type="binding site" evidence="1">
    <location>
        <begin position="166"/>
        <end position="173"/>
    </location>
    <ligand>
        <name>GTP</name>
        <dbReference type="ChEBI" id="CHEBI:37565"/>
    </ligand>
</feature>
<feature type="binding site" evidence="1">
    <location>
        <position position="173"/>
    </location>
    <ligand>
        <name>Mg(2+)</name>
        <dbReference type="ChEBI" id="CHEBI:18420"/>
    </ligand>
</feature>
<feature type="binding site" evidence="1">
    <location>
        <begin position="191"/>
        <end position="195"/>
    </location>
    <ligand>
        <name>GTP</name>
        <dbReference type="ChEBI" id="CHEBI:37565"/>
    </ligand>
</feature>
<feature type="binding site" evidence="1">
    <location>
        <position position="193"/>
    </location>
    <ligand>
        <name>Mg(2+)</name>
        <dbReference type="ChEBI" id="CHEBI:18420"/>
    </ligand>
</feature>
<feature type="binding site" evidence="1">
    <location>
        <begin position="212"/>
        <end position="215"/>
    </location>
    <ligand>
        <name>GTP</name>
        <dbReference type="ChEBI" id="CHEBI:37565"/>
    </ligand>
</feature>
<feature type="binding site" evidence="1">
    <location>
        <begin position="279"/>
        <end position="282"/>
    </location>
    <ligand>
        <name>GTP</name>
        <dbReference type="ChEBI" id="CHEBI:37565"/>
    </ligand>
</feature>
<feature type="binding site" evidence="1">
    <location>
        <begin position="308"/>
        <end position="310"/>
    </location>
    <ligand>
        <name>GTP</name>
        <dbReference type="ChEBI" id="CHEBI:37565"/>
    </ligand>
</feature>
<organism>
    <name type="scientific">Rhizobium rhizogenes (strain K84 / ATCC BAA-868)</name>
    <name type="common">Agrobacterium radiobacter</name>
    <dbReference type="NCBI Taxonomy" id="311403"/>
    <lineage>
        <taxon>Bacteria</taxon>
        <taxon>Pseudomonadati</taxon>
        <taxon>Pseudomonadota</taxon>
        <taxon>Alphaproteobacteria</taxon>
        <taxon>Hyphomicrobiales</taxon>
        <taxon>Rhizobiaceae</taxon>
        <taxon>Rhizobium/Agrobacterium group</taxon>
        <taxon>Rhizobium</taxon>
    </lineage>
</organism>
<proteinExistence type="inferred from homology"/>
<sequence length="371" mass="39986">MKFLDQAKVYIKSGDGGAGSVSFRREKFIEFGGPDGGDGGRGGDVWVEAVNGLNTLIDFRFQQHFKATIGTHGMGRNRAGAKGADVTLKVPVGTQIFEEDEETLICDLTREGQRYRVAAGGNGGFGNAYFKSSVNQAPDWANPGLPGEEKTIWLRLKLIADAGLVGLPNAGKSTFLAAVTRARPKIANYPFTTLHPNLGVATIDGQEFVLADIPGLIEGAHEGVGIGDRFLGHVERTRVLLHLVSAQEEKVGKAYKTVKHELEAYGNELTDKPEIVALSQIDVVDEETLKKKKRELARACGKTPFLISAITGSGMTEVLRALRDIIVEANGGAGQEAPMKALKVRHRDMQSSGNEGESEDNSDRDDEEQQG</sequence>
<gene>
    <name evidence="1" type="primary">obg</name>
    <name type="ordered locus">Arad_4875</name>
</gene>
<reference key="1">
    <citation type="journal article" date="2009" name="J. Bacteriol.">
        <title>Genome sequences of three Agrobacterium biovars help elucidate the evolution of multichromosome genomes in bacteria.</title>
        <authorList>
            <person name="Slater S.C."/>
            <person name="Goldman B.S."/>
            <person name="Goodner B."/>
            <person name="Setubal J.C."/>
            <person name="Farrand S.K."/>
            <person name="Nester E.W."/>
            <person name="Burr T.J."/>
            <person name="Banta L."/>
            <person name="Dickerman A.W."/>
            <person name="Paulsen I."/>
            <person name="Otten L."/>
            <person name="Suen G."/>
            <person name="Welch R."/>
            <person name="Almeida N.F."/>
            <person name="Arnold F."/>
            <person name="Burton O.T."/>
            <person name="Du Z."/>
            <person name="Ewing A."/>
            <person name="Godsy E."/>
            <person name="Heisel S."/>
            <person name="Houmiel K.L."/>
            <person name="Jhaveri J."/>
            <person name="Lu J."/>
            <person name="Miller N.M."/>
            <person name="Norton S."/>
            <person name="Chen Q."/>
            <person name="Phoolcharoen W."/>
            <person name="Ohlin V."/>
            <person name="Ondrusek D."/>
            <person name="Pride N."/>
            <person name="Stricklin S.L."/>
            <person name="Sun J."/>
            <person name="Wheeler C."/>
            <person name="Wilson L."/>
            <person name="Zhu H."/>
            <person name="Wood D.W."/>
        </authorList>
    </citation>
    <scope>NUCLEOTIDE SEQUENCE [LARGE SCALE GENOMIC DNA]</scope>
    <source>
        <strain>K84 / ATCC BAA-868</strain>
    </source>
</reference>
<protein>
    <recommendedName>
        <fullName evidence="1">GTPase Obg</fullName>
        <ecNumber evidence="1">3.6.5.-</ecNumber>
    </recommendedName>
    <alternativeName>
        <fullName evidence="1">GTP-binding protein Obg</fullName>
    </alternativeName>
</protein>
<accession>B9JER1</accession>
<comment type="function">
    <text evidence="1">An essential GTPase which binds GTP, GDP and possibly (p)ppGpp with moderate affinity, with high nucleotide exchange rates and a fairly low GTP hydrolysis rate. Plays a role in control of the cell cycle, stress response, ribosome biogenesis and in those bacteria that undergo differentiation, in morphogenesis control.</text>
</comment>
<comment type="cofactor">
    <cofactor evidence="1">
        <name>Mg(2+)</name>
        <dbReference type="ChEBI" id="CHEBI:18420"/>
    </cofactor>
</comment>
<comment type="subunit">
    <text evidence="1">Monomer.</text>
</comment>
<comment type="subcellular location">
    <subcellularLocation>
        <location evidence="1">Cytoplasm</location>
    </subcellularLocation>
</comment>
<comment type="similarity">
    <text evidence="1">Belongs to the TRAFAC class OBG-HflX-like GTPase superfamily. OBG GTPase family.</text>
</comment>
<keyword id="KW-0963">Cytoplasm</keyword>
<keyword id="KW-0342">GTP-binding</keyword>
<keyword id="KW-0378">Hydrolase</keyword>
<keyword id="KW-0460">Magnesium</keyword>
<keyword id="KW-0479">Metal-binding</keyword>
<keyword id="KW-0547">Nucleotide-binding</keyword>
<evidence type="ECO:0000255" key="1">
    <source>
        <dbReference type="HAMAP-Rule" id="MF_01454"/>
    </source>
</evidence>
<evidence type="ECO:0000255" key="2">
    <source>
        <dbReference type="PROSITE-ProRule" id="PRU01231"/>
    </source>
</evidence>
<evidence type="ECO:0000256" key="3">
    <source>
        <dbReference type="SAM" id="MobiDB-lite"/>
    </source>
</evidence>
<dbReference type="EC" id="3.6.5.-" evidence="1"/>
<dbReference type="EMBL" id="CP000628">
    <property type="protein sequence ID" value="ACM28480.1"/>
    <property type="molecule type" value="Genomic_DNA"/>
</dbReference>
<dbReference type="SMR" id="B9JER1"/>
<dbReference type="STRING" id="311403.Arad_4875"/>
<dbReference type="KEGG" id="ara:Arad_4875"/>
<dbReference type="eggNOG" id="COG0536">
    <property type="taxonomic scope" value="Bacteria"/>
</dbReference>
<dbReference type="HOGENOM" id="CLU_011747_2_0_5"/>
<dbReference type="Proteomes" id="UP000001600">
    <property type="component" value="Chromosome 1"/>
</dbReference>
<dbReference type="GO" id="GO:0005737">
    <property type="term" value="C:cytoplasm"/>
    <property type="evidence" value="ECO:0007669"/>
    <property type="project" value="UniProtKB-SubCell"/>
</dbReference>
<dbReference type="GO" id="GO:0005525">
    <property type="term" value="F:GTP binding"/>
    <property type="evidence" value="ECO:0007669"/>
    <property type="project" value="UniProtKB-UniRule"/>
</dbReference>
<dbReference type="GO" id="GO:0003924">
    <property type="term" value="F:GTPase activity"/>
    <property type="evidence" value="ECO:0007669"/>
    <property type="project" value="UniProtKB-UniRule"/>
</dbReference>
<dbReference type="GO" id="GO:0000287">
    <property type="term" value="F:magnesium ion binding"/>
    <property type="evidence" value="ECO:0007669"/>
    <property type="project" value="InterPro"/>
</dbReference>
<dbReference type="GO" id="GO:0042254">
    <property type="term" value="P:ribosome biogenesis"/>
    <property type="evidence" value="ECO:0007669"/>
    <property type="project" value="UniProtKB-UniRule"/>
</dbReference>
<dbReference type="CDD" id="cd01898">
    <property type="entry name" value="Obg"/>
    <property type="match status" value="1"/>
</dbReference>
<dbReference type="FunFam" id="2.70.210.12:FF:000001">
    <property type="entry name" value="GTPase Obg"/>
    <property type="match status" value="1"/>
</dbReference>
<dbReference type="Gene3D" id="2.70.210.12">
    <property type="entry name" value="GTP1/OBG domain"/>
    <property type="match status" value="1"/>
</dbReference>
<dbReference type="Gene3D" id="3.40.50.300">
    <property type="entry name" value="P-loop containing nucleotide triphosphate hydrolases"/>
    <property type="match status" value="1"/>
</dbReference>
<dbReference type="HAMAP" id="MF_01454">
    <property type="entry name" value="GTPase_Obg"/>
    <property type="match status" value="1"/>
</dbReference>
<dbReference type="InterPro" id="IPR031167">
    <property type="entry name" value="G_OBG"/>
</dbReference>
<dbReference type="InterPro" id="IPR006073">
    <property type="entry name" value="GTP-bd"/>
</dbReference>
<dbReference type="InterPro" id="IPR014100">
    <property type="entry name" value="GTP-bd_Obg/CgtA"/>
</dbReference>
<dbReference type="InterPro" id="IPR006074">
    <property type="entry name" value="GTP1-OBG_CS"/>
</dbReference>
<dbReference type="InterPro" id="IPR006169">
    <property type="entry name" value="GTP1_OBG_dom"/>
</dbReference>
<dbReference type="InterPro" id="IPR036726">
    <property type="entry name" value="GTP1_OBG_dom_sf"/>
</dbReference>
<dbReference type="InterPro" id="IPR045086">
    <property type="entry name" value="OBG_GTPase"/>
</dbReference>
<dbReference type="InterPro" id="IPR027417">
    <property type="entry name" value="P-loop_NTPase"/>
</dbReference>
<dbReference type="InterPro" id="IPR005225">
    <property type="entry name" value="Small_GTP-bd"/>
</dbReference>
<dbReference type="NCBIfam" id="TIGR02729">
    <property type="entry name" value="Obg_CgtA"/>
    <property type="match status" value="1"/>
</dbReference>
<dbReference type="NCBIfam" id="NF008955">
    <property type="entry name" value="PRK12297.1"/>
    <property type="match status" value="1"/>
</dbReference>
<dbReference type="NCBIfam" id="NF008956">
    <property type="entry name" value="PRK12299.1"/>
    <property type="match status" value="1"/>
</dbReference>
<dbReference type="NCBIfam" id="TIGR00231">
    <property type="entry name" value="small_GTP"/>
    <property type="match status" value="1"/>
</dbReference>
<dbReference type="PANTHER" id="PTHR11702">
    <property type="entry name" value="DEVELOPMENTALLY REGULATED GTP-BINDING PROTEIN-RELATED"/>
    <property type="match status" value="1"/>
</dbReference>
<dbReference type="PANTHER" id="PTHR11702:SF31">
    <property type="entry name" value="MITOCHONDRIAL RIBOSOME-ASSOCIATED GTPASE 2"/>
    <property type="match status" value="1"/>
</dbReference>
<dbReference type="Pfam" id="PF01018">
    <property type="entry name" value="GTP1_OBG"/>
    <property type="match status" value="1"/>
</dbReference>
<dbReference type="Pfam" id="PF01926">
    <property type="entry name" value="MMR_HSR1"/>
    <property type="match status" value="1"/>
</dbReference>
<dbReference type="PIRSF" id="PIRSF002401">
    <property type="entry name" value="GTP_bd_Obg/CgtA"/>
    <property type="match status" value="1"/>
</dbReference>
<dbReference type="PRINTS" id="PR00326">
    <property type="entry name" value="GTP1OBG"/>
</dbReference>
<dbReference type="SUPFAM" id="SSF82051">
    <property type="entry name" value="Obg GTP-binding protein N-terminal domain"/>
    <property type="match status" value="1"/>
</dbReference>
<dbReference type="SUPFAM" id="SSF52540">
    <property type="entry name" value="P-loop containing nucleoside triphosphate hydrolases"/>
    <property type="match status" value="1"/>
</dbReference>
<dbReference type="PROSITE" id="PS51710">
    <property type="entry name" value="G_OBG"/>
    <property type="match status" value="1"/>
</dbReference>
<dbReference type="PROSITE" id="PS00905">
    <property type="entry name" value="GTP1_OBG"/>
    <property type="match status" value="1"/>
</dbReference>
<dbReference type="PROSITE" id="PS51883">
    <property type="entry name" value="OBG"/>
    <property type="match status" value="1"/>
</dbReference>
<name>OBG_RHIR8</name>